<organism>
    <name type="scientific">Mycobacterium tuberculosis (strain ATCC 25618 / H37Rv)</name>
    <dbReference type="NCBI Taxonomy" id="83332"/>
    <lineage>
        <taxon>Bacteria</taxon>
        <taxon>Bacillati</taxon>
        <taxon>Actinomycetota</taxon>
        <taxon>Actinomycetes</taxon>
        <taxon>Mycobacteriales</taxon>
        <taxon>Mycobacteriaceae</taxon>
        <taxon>Mycobacterium</taxon>
        <taxon>Mycobacterium tuberculosis complex</taxon>
    </lineage>
</organism>
<sequence>MTASTALTVAIWIGVMLIGGIGSVLRFLVDRSVARRLARTFPYGTLTVNITGAALLGFLAGLALPKDAALLAGTGFVGAYTTFSTWMLETQRLGEDRQMVSALANIVVSVVLGLAAALLGQWIAQI</sequence>
<protein>
    <recommendedName>
        <fullName evidence="1">Fluoride-specific ion channel FluC 2</fullName>
    </recommendedName>
</protein>
<comment type="function">
    <text evidence="1">Fluoride-specific ion channel. Important for reducing fluoride concentration in the cell, thus reducing its toxicity.</text>
</comment>
<comment type="catalytic activity">
    <reaction evidence="1">
        <text>fluoride(in) = fluoride(out)</text>
        <dbReference type="Rhea" id="RHEA:76159"/>
        <dbReference type="ChEBI" id="CHEBI:17051"/>
    </reaction>
    <physiologicalReaction direction="left-to-right" evidence="1">
        <dbReference type="Rhea" id="RHEA:76160"/>
    </physiologicalReaction>
</comment>
<comment type="activity regulation">
    <text evidence="1">Na(+) is not transported, but it plays an essential structural role and its presence is essential for fluoride channel function.</text>
</comment>
<comment type="subcellular location">
    <subcellularLocation>
        <location evidence="1">Cell membrane</location>
        <topology evidence="1">Multi-pass membrane protein</topology>
    </subcellularLocation>
</comment>
<comment type="similarity">
    <text evidence="1">Belongs to the fluoride channel Fluc/FEX (TC 1.A.43) family.</text>
</comment>
<accession>P9WP61</accession>
<accession>L0TE95</accession>
<accession>P63864</accession>
<accession>P95088</accession>
<proteinExistence type="inferred from homology"/>
<keyword id="KW-1003">Cell membrane</keyword>
<keyword id="KW-0407">Ion channel</keyword>
<keyword id="KW-0406">Ion transport</keyword>
<keyword id="KW-0472">Membrane</keyword>
<keyword id="KW-0479">Metal-binding</keyword>
<keyword id="KW-1185">Reference proteome</keyword>
<keyword id="KW-0915">Sodium</keyword>
<keyword id="KW-0812">Transmembrane</keyword>
<keyword id="KW-1133">Transmembrane helix</keyword>
<keyword id="KW-0813">Transport</keyword>
<feature type="chain" id="PRO_0000110138" description="Fluoride-specific ion channel FluC 2">
    <location>
        <begin position="1"/>
        <end position="126"/>
    </location>
</feature>
<feature type="transmembrane region" description="Helical" evidence="1">
    <location>
        <begin position="5"/>
        <end position="25"/>
    </location>
</feature>
<feature type="transmembrane region" description="Helical" evidence="1">
    <location>
        <begin position="44"/>
        <end position="64"/>
    </location>
</feature>
<feature type="transmembrane region" description="Helical" evidence="1">
    <location>
        <begin position="68"/>
        <end position="88"/>
    </location>
</feature>
<feature type="transmembrane region" description="Helical" evidence="1">
    <location>
        <begin position="99"/>
        <end position="119"/>
    </location>
</feature>
<feature type="binding site" evidence="1">
    <location>
        <position position="78"/>
    </location>
    <ligand>
        <name>Na(+)</name>
        <dbReference type="ChEBI" id="CHEBI:29101"/>
        <note>structural</note>
    </ligand>
</feature>
<feature type="binding site" evidence="1">
    <location>
        <position position="81"/>
    </location>
    <ligand>
        <name>Na(+)</name>
        <dbReference type="ChEBI" id="CHEBI:29101"/>
        <note>structural</note>
    </ligand>
</feature>
<evidence type="ECO:0000255" key="1">
    <source>
        <dbReference type="HAMAP-Rule" id="MF_00454"/>
    </source>
</evidence>
<reference key="1">
    <citation type="journal article" date="1998" name="Nature">
        <title>Deciphering the biology of Mycobacterium tuberculosis from the complete genome sequence.</title>
        <authorList>
            <person name="Cole S.T."/>
            <person name="Brosch R."/>
            <person name="Parkhill J."/>
            <person name="Garnier T."/>
            <person name="Churcher C.M."/>
            <person name="Harris D.E."/>
            <person name="Gordon S.V."/>
            <person name="Eiglmeier K."/>
            <person name="Gas S."/>
            <person name="Barry C.E. III"/>
            <person name="Tekaia F."/>
            <person name="Badcock K."/>
            <person name="Basham D."/>
            <person name="Brown D."/>
            <person name="Chillingworth T."/>
            <person name="Connor R."/>
            <person name="Davies R.M."/>
            <person name="Devlin K."/>
            <person name="Feltwell T."/>
            <person name="Gentles S."/>
            <person name="Hamlin N."/>
            <person name="Holroyd S."/>
            <person name="Hornsby T."/>
            <person name="Jagels K."/>
            <person name="Krogh A."/>
            <person name="McLean J."/>
            <person name="Moule S."/>
            <person name="Murphy L.D."/>
            <person name="Oliver S."/>
            <person name="Osborne J."/>
            <person name="Quail M.A."/>
            <person name="Rajandream M.A."/>
            <person name="Rogers J."/>
            <person name="Rutter S."/>
            <person name="Seeger K."/>
            <person name="Skelton S."/>
            <person name="Squares S."/>
            <person name="Squares R."/>
            <person name="Sulston J.E."/>
            <person name="Taylor K."/>
            <person name="Whitehead S."/>
            <person name="Barrell B.G."/>
        </authorList>
    </citation>
    <scope>NUCLEOTIDE SEQUENCE [LARGE SCALE GENOMIC DNA]</scope>
    <source>
        <strain>ATCC 25618 / H37Rv</strain>
    </source>
</reference>
<dbReference type="EMBL" id="AL123456">
    <property type="protein sequence ID" value="CCP45879.1"/>
    <property type="molecule type" value="Genomic_DNA"/>
</dbReference>
<dbReference type="PIR" id="G70650">
    <property type="entry name" value="G70650"/>
</dbReference>
<dbReference type="RefSeq" id="NP_217586.1">
    <property type="nucleotide sequence ID" value="NC_000962.3"/>
</dbReference>
<dbReference type="SMR" id="P9WP61"/>
<dbReference type="FunCoup" id="P9WP61">
    <property type="interactions" value="1"/>
</dbReference>
<dbReference type="STRING" id="83332.Rv3070"/>
<dbReference type="PaxDb" id="83332-Rv3070"/>
<dbReference type="DNASU" id="888651"/>
<dbReference type="GeneID" id="888651"/>
<dbReference type="KEGG" id="mtu:Rv3070"/>
<dbReference type="KEGG" id="mtv:RVBD_3070"/>
<dbReference type="TubercuList" id="Rv3070"/>
<dbReference type="eggNOG" id="COG0239">
    <property type="taxonomic scope" value="Bacteria"/>
</dbReference>
<dbReference type="InParanoid" id="P9WP61"/>
<dbReference type="OrthoDB" id="5148600at2"/>
<dbReference type="PhylomeDB" id="P9WP61"/>
<dbReference type="Proteomes" id="UP000001584">
    <property type="component" value="Chromosome"/>
</dbReference>
<dbReference type="GO" id="GO:0005886">
    <property type="term" value="C:plasma membrane"/>
    <property type="evidence" value="ECO:0000318"/>
    <property type="project" value="GO_Central"/>
</dbReference>
<dbReference type="GO" id="GO:0062054">
    <property type="term" value="F:fluoride channel activity"/>
    <property type="evidence" value="ECO:0007669"/>
    <property type="project" value="UniProtKB-UniRule"/>
</dbReference>
<dbReference type="GO" id="GO:1903425">
    <property type="term" value="F:fluoride transmembrane transporter activity"/>
    <property type="evidence" value="ECO:0000318"/>
    <property type="project" value="GO_Central"/>
</dbReference>
<dbReference type="GO" id="GO:0046872">
    <property type="term" value="F:metal ion binding"/>
    <property type="evidence" value="ECO:0007669"/>
    <property type="project" value="UniProtKB-KW"/>
</dbReference>
<dbReference type="GO" id="GO:0140114">
    <property type="term" value="P:cellular detoxification of fluoride"/>
    <property type="evidence" value="ECO:0007669"/>
    <property type="project" value="UniProtKB-UniRule"/>
</dbReference>
<dbReference type="GO" id="GO:1903424">
    <property type="term" value="P:fluoride transmembrane transport"/>
    <property type="evidence" value="ECO:0000318"/>
    <property type="project" value="GO_Central"/>
</dbReference>
<dbReference type="HAMAP" id="MF_00454">
    <property type="entry name" value="FluC"/>
    <property type="match status" value="1"/>
</dbReference>
<dbReference type="InterPro" id="IPR003691">
    <property type="entry name" value="FluC"/>
</dbReference>
<dbReference type="NCBIfam" id="TIGR00494">
    <property type="entry name" value="crcB"/>
    <property type="match status" value="1"/>
</dbReference>
<dbReference type="NCBIfam" id="NF010824">
    <property type="entry name" value="PRK14228.1"/>
    <property type="match status" value="1"/>
</dbReference>
<dbReference type="PANTHER" id="PTHR28259">
    <property type="entry name" value="FLUORIDE EXPORT PROTEIN 1-RELATED"/>
    <property type="match status" value="1"/>
</dbReference>
<dbReference type="PANTHER" id="PTHR28259:SF1">
    <property type="entry name" value="FLUORIDE EXPORT PROTEIN 1-RELATED"/>
    <property type="match status" value="1"/>
</dbReference>
<dbReference type="Pfam" id="PF02537">
    <property type="entry name" value="CRCB"/>
    <property type="match status" value="1"/>
</dbReference>
<name>FLUC2_MYCTU</name>
<gene>
    <name evidence="1" type="primary">fluC2</name>
    <name evidence="1" type="synonym">crcB2</name>
    <name type="ordered locus">Rv3070</name>
    <name type="ORF">MTCY22D7.11c</name>
</gene>